<accession>A9KHY1</accession>
<reference key="1">
    <citation type="submission" date="2007-11" db="EMBL/GenBank/DDBJ databases">
        <title>Complete genome sequence of Clostridium phytofermentans ISDg.</title>
        <authorList>
            <person name="Leschine S.B."/>
            <person name="Warnick T.A."/>
            <person name="Blanchard J.L."/>
            <person name="Schnell D.J."/>
            <person name="Petit E.L."/>
            <person name="LaTouf W.G."/>
            <person name="Copeland A."/>
            <person name="Lucas S."/>
            <person name="Lapidus A."/>
            <person name="Barry K."/>
            <person name="Glavina del Rio T."/>
            <person name="Dalin E."/>
            <person name="Tice H."/>
            <person name="Pitluck S."/>
            <person name="Kiss H."/>
            <person name="Brettin T."/>
            <person name="Bruce D."/>
            <person name="Detter J.C."/>
            <person name="Han C."/>
            <person name="Kuske C."/>
            <person name="Schmutz J."/>
            <person name="Larimer F."/>
            <person name="Land M."/>
            <person name="Hauser L."/>
            <person name="Kyrpides N."/>
            <person name="Kim E.A."/>
            <person name="Richardson P."/>
        </authorList>
    </citation>
    <scope>NUCLEOTIDE SEQUENCE [LARGE SCALE GENOMIC DNA]</scope>
    <source>
        <strain>ATCC 700394 / DSM 18823 / ISDg</strain>
    </source>
</reference>
<gene>
    <name evidence="1" type="primary">pheS</name>
    <name type="ordered locus">Cphy_3477</name>
</gene>
<keyword id="KW-0030">Aminoacyl-tRNA synthetase</keyword>
<keyword id="KW-0067">ATP-binding</keyword>
<keyword id="KW-0963">Cytoplasm</keyword>
<keyword id="KW-0436">Ligase</keyword>
<keyword id="KW-0460">Magnesium</keyword>
<keyword id="KW-0479">Metal-binding</keyword>
<keyword id="KW-0547">Nucleotide-binding</keyword>
<keyword id="KW-0648">Protein biosynthesis</keyword>
<keyword id="KW-1185">Reference proteome</keyword>
<sequence length="339" mass="38278">MNQTLMEIKERALSQINASDTLDALNEIRVNFLGKKGELTSVLKSMKDVAPEDRPKVGQLVNEARESLEEALESKKEAFGKVLREAKMKAETIDVTLPAKKPMLGHRHPNTIALEEAERIFVGMGYEVVEGPEIEYDYYNFEALNIPANHPAKDEQDTFYVTSNILLRTQTSPVQVHVMEQGKLPIRMIAPGRVFRSDEVDATHSPSFHQIEGLVIDKNITFADLKGTLAEFAKQLFGEETKVKFRPHHFPFTEPSAEVDVSCFKCGGKGCRFCKGSGWIEILGCGMVHPRVLEMSGIDPEEYTGFAFGVGLERIALLKYEIDDMRLLYENDMRFLKQF</sequence>
<proteinExistence type="inferred from homology"/>
<comment type="catalytic activity">
    <reaction evidence="1">
        <text>tRNA(Phe) + L-phenylalanine + ATP = L-phenylalanyl-tRNA(Phe) + AMP + diphosphate + H(+)</text>
        <dbReference type="Rhea" id="RHEA:19413"/>
        <dbReference type="Rhea" id="RHEA-COMP:9668"/>
        <dbReference type="Rhea" id="RHEA-COMP:9699"/>
        <dbReference type="ChEBI" id="CHEBI:15378"/>
        <dbReference type="ChEBI" id="CHEBI:30616"/>
        <dbReference type="ChEBI" id="CHEBI:33019"/>
        <dbReference type="ChEBI" id="CHEBI:58095"/>
        <dbReference type="ChEBI" id="CHEBI:78442"/>
        <dbReference type="ChEBI" id="CHEBI:78531"/>
        <dbReference type="ChEBI" id="CHEBI:456215"/>
        <dbReference type="EC" id="6.1.1.20"/>
    </reaction>
</comment>
<comment type="cofactor">
    <cofactor evidence="1">
        <name>Mg(2+)</name>
        <dbReference type="ChEBI" id="CHEBI:18420"/>
    </cofactor>
    <text evidence="1">Binds 2 magnesium ions per tetramer.</text>
</comment>
<comment type="subunit">
    <text evidence="1">Tetramer of two alpha and two beta subunits.</text>
</comment>
<comment type="subcellular location">
    <subcellularLocation>
        <location evidence="1">Cytoplasm</location>
    </subcellularLocation>
</comment>
<comment type="similarity">
    <text evidence="1">Belongs to the class-II aminoacyl-tRNA synthetase family. Phe-tRNA synthetase alpha subunit type 1 subfamily.</text>
</comment>
<feature type="chain" id="PRO_1000078832" description="Phenylalanine--tRNA ligase alpha subunit">
    <location>
        <begin position="1"/>
        <end position="339"/>
    </location>
</feature>
<feature type="binding site" evidence="1">
    <location>
        <position position="254"/>
    </location>
    <ligand>
        <name>Mg(2+)</name>
        <dbReference type="ChEBI" id="CHEBI:18420"/>
        <note>shared with beta subunit</note>
    </ligand>
</feature>
<dbReference type="EC" id="6.1.1.20" evidence="1"/>
<dbReference type="EMBL" id="CP000885">
    <property type="protein sequence ID" value="ABX43828.1"/>
    <property type="molecule type" value="Genomic_DNA"/>
</dbReference>
<dbReference type="RefSeq" id="WP_012201476.1">
    <property type="nucleotide sequence ID" value="NC_010001.1"/>
</dbReference>
<dbReference type="SMR" id="A9KHY1"/>
<dbReference type="STRING" id="357809.Cphy_3477"/>
<dbReference type="KEGG" id="cpy:Cphy_3477"/>
<dbReference type="eggNOG" id="COG0016">
    <property type="taxonomic scope" value="Bacteria"/>
</dbReference>
<dbReference type="HOGENOM" id="CLU_025086_0_1_9"/>
<dbReference type="OrthoDB" id="9800719at2"/>
<dbReference type="Proteomes" id="UP000000370">
    <property type="component" value="Chromosome"/>
</dbReference>
<dbReference type="GO" id="GO:0005737">
    <property type="term" value="C:cytoplasm"/>
    <property type="evidence" value="ECO:0007669"/>
    <property type="project" value="UniProtKB-SubCell"/>
</dbReference>
<dbReference type="GO" id="GO:0005524">
    <property type="term" value="F:ATP binding"/>
    <property type="evidence" value="ECO:0007669"/>
    <property type="project" value="UniProtKB-UniRule"/>
</dbReference>
<dbReference type="GO" id="GO:0140096">
    <property type="term" value="F:catalytic activity, acting on a protein"/>
    <property type="evidence" value="ECO:0007669"/>
    <property type="project" value="UniProtKB-ARBA"/>
</dbReference>
<dbReference type="GO" id="GO:0000287">
    <property type="term" value="F:magnesium ion binding"/>
    <property type="evidence" value="ECO:0007669"/>
    <property type="project" value="UniProtKB-UniRule"/>
</dbReference>
<dbReference type="GO" id="GO:0004826">
    <property type="term" value="F:phenylalanine-tRNA ligase activity"/>
    <property type="evidence" value="ECO:0007669"/>
    <property type="project" value="UniProtKB-UniRule"/>
</dbReference>
<dbReference type="GO" id="GO:0016740">
    <property type="term" value="F:transferase activity"/>
    <property type="evidence" value="ECO:0007669"/>
    <property type="project" value="UniProtKB-ARBA"/>
</dbReference>
<dbReference type="GO" id="GO:0000049">
    <property type="term" value="F:tRNA binding"/>
    <property type="evidence" value="ECO:0007669"/>
    <property type="project" value="InterPro"/>
</dbReference>
<dbReference type="GO" id="GO:0006432">
    <property type="term" value="P:phenylalanyl-tRNA aminoacylation"/>
    <property type="evidence" value="ECO:0007669"/>
    <property type="project" value="UniProtKB-UniRule"/>
</dbReference>
<dbReference type="CDD" id="cd00496">
    <property type="entry name" value="PheRS_alpha_core"/>
    <property type="match status" value="1"/>
</dbReference>
<dbReference type="FunFam" id="3.30.930.10:FF:000003">
    <property type="entry name" value="Phenylalanine--tRNA ligase alpha subunit"/>
    <property type="match status" value="1"/>
</dbReference>
<dbReference type="Gene3D" id="3.30.930.10">
    <property type="entry name" value="Bira Bifunctional Protein, Domain 2"/>
    <property type="match status" value="1"/>
</dbReference>
<dbReference type="HAMAP" id="MF_00281">
    <property type="entry name" value="Phe_tRNA_synth_alpha1"/>
    <property type="match status" value="1"/>
</dbReference>
<dbReference type="InterPro" id="IPR006195">
    <property type="entry name" value="aa-tRNA-synth_II"/>
</dbReference>
<dbReference type="InterPro" id="IPR045864">
    <property type="entry name" value="aa-tRNA-synth_II/BPL/LPL"/>
</dbReference>
<dbReference type="InterPro" id="IPR004529">
    <property type="entry name" value="Phe-tRNA-synth_IIc_asu"/>
</dbReference>
<dbReference type="InterPro" id="IPR004188">
    <property type="entry name" value="Phe-tRNA_ligase_II_N"/>
</dbReference>
<dbReference type="InterPro" id="IPR022911">
    <property type="entry name" value="Phe_tRNA_ligase_alpha1_bac"/>
</dbReference>
<dbReference type="InterPro" id="IPR002319">
    <property type="entry name" value="Phenylalanyl-tRNA_Synthase"/>
</dbReference>
<dbReference type="InterPro" id="IPR010978">
    <property type="entry name" value="tRNA-bd_arm"/>
</dbReference>
<dbReference type="NCBIfam" id="TIGR00468">
    <property type="entry name" value="pheS"/>
    <property type="match status" value="1"/>
</dbReference>
<dbReference type="PANTHER" id="PTHR11538:SF41">
    <property type="entry name" value="PHENYLALANINE--TRNA LIGASE, MITOCHONDRIAL"/>
    <property type="match status" value="1"/>
</dbReference>
<dbReference type="PANTHER" id="PTHR11538">
    <property type="entry name" value="PHENYLALANYL-TRNA SYNTHETASE"/>
    <property type="match status" value="1"/>
</dbReference>
<dbReference type="Pfam" id="PF02912">
    <property type="entry name" value="Phe_tRNA-synt_N"/>
    <property type="match status" value="1"/>
</dbReference>
<dbReference type="Pfam" id="PF01409">
    <property type="entry name" value="tRNA-synt_2d"/>
    <property type="match status" value="1"/>
</dbReference>
<dbReference type="SUPFAM" id="SSF55681">
    <property type="entry name" value="Class II aaRS and biotin synthetases"/>
    <property type="match status" value="1"/>
</dbReference>
<dbReference type="SUPFAM" id="SSF46589">
    <property type="entry name" value="tRNA-binding arm"/>
    <property type="match status" value="1"/>
</dbReference>
<dbReference type="PROSITE" id="PS50862">
    <property type="entry name" value="AA_TRNA_LIGASE_II"/>
    <property type="match status" value="1"/>
</dbReference>
<evidence type="ECO:0000255" key="1">
    <source>
        <dbReference type="HAMAP-Rule" id="MF_00281"/>
    </source>
</evidence>
<name>SYFA_LACP7</name>
<protein>
    <recommendedName>
        <fullName evidence="1">Phenylalanine--tRNA ligase alpha subunit</fullName>
        <ecNumber evidence="1">6.1.1.20</ecNumber>
    </recommendedName>
    <alternativeName>
        <fullName evidence="1">Phenylalanyl-tRNA synthetase alpha subunit</fullName>
        <shortName evidence="1">PheRS</shortName>
    </alternativeName>
</protein>
<organism>
    <name type="scientific">Lachnoclostridium phytofermentans (strain ATCC 700394 / DSM 18823 / ISDg)</name>
    <name type="common">Clostridium phytofermentans</name>
    <dbReference type="NCBI Taxonomy" id="357809"/>
    <lineage>
        <taxon>Bacteria</taxon>
        <taxon>Bacillati</taxon>
        <taxon>Bacillota</taxon>
        <taxon>Clostridia</taxon>
        <taxon>Lachnospirales</taxon>
        <taxon>Lachnospiraceae</taxon>
    </lineage>
</organism>